<comment type="function">
    <text evidence="1">Part of the ecpRABCDE operon, which encodes the E.coli common pilus (ECP). ECP is found in both commensal and pathogenic strains and plays a dual role in early-stage biofilm development and host cell recognition. Positively regulates the expression of the ecp operon (By similarity).</text>
</comment>
<comment type="subcellular location">
    <subcellularLocation>
        <location evidence="3">Cytoplasm</location>
    </subcellularLocation>
</comment>
<comment type="induction">
    <text evidence="1">Negatively regulated by H-NS. Positively autoregulated. Also positively regulated by IHF (By similarity).</text>
</comment>
<comment type="similarity">
    <text evidence="3">Belongs to the EcpR/MatA family.</text>
</comment>
<comment type="sequence caution" evidence="3">
    <conflict type="erroneous initiation">
        <sequence resource="EMBL-CDS" id="ABG68391"/>
    </conflict>
</comment>
<evidence type="ECO:0000250" key="1"/>
<evidence type="ECO:0000255" key="2">
    <source>
        <dbReference type="PROSITE-ProRule" id="PRU00411"/>
    </source>
</evidence>
<evidence type="ECO:0000305" key="3"/>
<proteinExistence type="inferred from homology"/>
<protein>
    <recommendedName>
        <fullName>HTH-type transcriptional regulator EcpR</fullName>
    </recommendedName>
</protein>
<keyword id="KW-0010">Activator</keyword>
<keyword id="KW-0963">Cytoplasm</keyword>
<keyword id="KW-0238">DNA-binding</keyword>
<keyword id="KW-0804">Transcription</keyword>
<keyword id="KW-0805">Transcription regulation</keyword>
<name>ECPR_ECOL5</name>
<sequence length="196" mass="23299">MTWQNDYSRDYEVKNHMECQNRSDKYIWSPHDAYFYKGLSELIVDIDRLIYLSLEKIRKDFVFINLNTDSLTEFINRDNEWLSAVKGKQVVLIAARKSEALANYWYYNSNIRGVVYAGLSRDIRKELAYVINGRFLRKDIKKDKITDREMEIIRMTAQGMLPKSIARIENCSVKTVYTHRRNAEAKLYSKLYKLVQ</sequence>
<accession>Q0TKZ0</accession>
<organism>
    <name type="scientific">Escherichia coli O6:K15:H31 (strain 536 / UPEC)</name>
    <dbReference type="NCBI Taxonomy" id="362663"/>
    <lineage>
        <taxon>Bacteria</taxon>
        <taxon>Pseudomonadati</taxon>
        <taxon>Pseudomonadota</taxon>
        <taxon>Gammaproteobacteria</taxon>
        <taxon>Enterobacterales</taxon>
        <taxon>Enterobacteriaceae</taxon>
        <taxon>Escherichia</taxon>
    </lineage>
</organism>
<gene>
    <name type="primary">ecpR</name>
    <name type="synonym">matA</name>
    <name type="ordered locus">ECP_0357</name>
</gene>
<feature type="chain" id="PRO_0000369184" description="HTH-type transcriptional regulator EcpR">
    <location>
        <begin position="1"/>
        <end position="196"/>
    </location>
</feature>
<feature type="domain" description="HTH luxR-type" evidence="2">
    <location>
        <begin position="138"/>
        <end position="196"/>
    </location>
</feature>
<feature type="DNA-binding region" description="H-T-H motif" evidence="2">
    <location>
        <begin position="162"/>
        <end position="181"/>
    </location>
</feature>
<dbReference type="EMBL" id="CP000247">
    <property type="protein sequence ID" value="ABG68391.1"/>
    <property type="status" value="ALT_INIT"/>
    <property type="molecule type" value="Genomic_DNA"/>
</dbReference>
<dbReference type="SMR" id="Q0TKZ0"/>
<dbReference type="KEGG" id="ecp:ECP_0357"/>
<dbReference type="HOGENOM" id="CLU_128111_0_0_6"/>
<dbReference type="Proteomes" id="UP000009182">
    <property type="component" value="Chromosome"/>
</dbReference>
<dbReference type="GO" id="GO:0005737">
    <property type="term" value="C:cytoplasm"/>
    <property type="evidence" value="ECO:0007669"/>
    <property type="project" value="UniProtKB-SubCell"/>
</dbReference>
<dbReference type="GO" id="GO:0003677">
    <property type="term" value="F:DNA binding"/>
    <property type="evidence" value="ECO:0007669"/>
    <property type="project" value="UniProtKB-KW"/>
</dbReference>
<dbReference type="GO" id="GO:0006355">
    <property type="term" value="P:regulation of DNA-templated transcription"/>
    <property type="evidence" value="ECO:0007669"/>
    <property type="project" value="InterPro"/>
</dbReference>
<dbReference type="CDD" id="cd06170">
    <property type="entry name" value="LuxR_C_like"/>
    <property type="match status" value="1"/>
</dbReference>
<dbReference type="Gene3D" id="1.10.10.10">
    <property type="entry name" value="Winged helix-like DNA-binding domain superfamily/Winged helix DNA-binding domain"/>
    <property type="match status" value="1"/>
</dbReference>
<dbReference type="InterPro" id="IPR016032">
    <property type="entry name" value="Sig_transdc_resp-reg_C-effctor"/>
</dbReference>
<dbReference type="InterPro" id="IPR000792">
    <property type="entry name" value="Tscrpt_reg_LuxR_C"/>
</dbReference>
<dbReference type="InterPro" id="IPR036388">
    <property type="entry name" value="WH-like_DNA-bd_sf"/>
</dbReference>
<dbReference type="Pfam" id="PF00196">
    <property type="entry name" value="GerE"/>
    <property type="match status" value="1"/>
</dbReference>
<dbReference type="PRINTS" id="PR00038">
    <property type="entry name" value="HTHLUXR"/>
</dbReference>
<dbReference type="SMART" id="SM00421">
    <property type="entry name" value="HTH_LUXR"/>
    <property type="match status" value="1"/>
</dbReference>
<dbReference type="SUPFAM" id="SSF46894">
    <property type="entry name" value="C-terminal effector domain of the bipartite response regulators"/>
    <property type="match status" value="1"/>
</dbReference>
<dbReference type="PROSITE" id="PS50043">
    <property type="entry name" value="HTH_LUXR_2"/>
    <property type="match status" value="1"/>
</dbReference>
<reference key="1">
    <citation type="journal article" date="2006" name="Mol. Microbiol.">
        <title>Role of pathogenicity island-associated integrases in the genome plasticity of uropathogenic Escherichia coli strain 536.</title>
        <authorList>
            <person name="Hochhut B."/>
            <person name="Wilde C."/>
            <person name="Balling G."/>
            <person name="Middendorf B."/>
            <person name="Dobrindt U."/>
            <person name="Brzuszkiewicz E."/>
            <person name="Gottschalk G."/>
            <person name="Carniel E."/>
            <person name="Hacker J."/>
        </authorList>
    </citation>
    <scope>NUCLEOTIDE SEQUENCE [LARGE SCALE GENOMIC DNA]</scope>
    <source>
        <strain>536 / UPEC</strain>
    </source>
</reference>